<comment type="function">
    <text evidence="5">Acts as a corepressor of recombining binding protein suppressor hairless (RBPJ) and inhibits Notch signaling in neural stem cells, thereby opposing their self-renewal and promoting neurogenesis (PubMed:23571214).</text>
</comment>
<comment type="subunit">
    <text evidence="5">Interacts (via BEN domain) with RBPJ.</text>
</comment>
<comment type="subcellular location">
    <subcellularLocation>
        <location evidence="1">Nucleus</location>
    </subcellularLocation>
</comment>
<comment type="alternative products">
    <event type="alternative splicing"/>
    <isoform>
        <id>Q5SZJ8-1</id>
        <name>1</name>
        <sequence type="displayed"/>
    </isoform>
    <isoform>
        <id>Q5SZJ8-2</id>
        <name>2</name>
        <sequence type="described" ref="VSP_026963 VSP_026964"/>
    </isoform>
    <isoform>
        <id>Q5SZJ8-3</id>
        <name>3</name>
        <sequence type="described" ref="VSP_026961 VSP_026962"/>
    </isoform>
    <isoform>
        <id>Q5SZJ8-4</id>
        <name>4</name>
        <sequence type="described" ref="VSP_026965 VSP_026966"/>
    </isoform>
</comment>
<feature type="chain" id="PRO_0000295660" description="BEN domain-containing protein 6">
    <location>
        <begin position="1"/>
        <end position="279"/>
    </location>
</feature>
<feature type="domain" description="BEN" evidence="3">
    <location>
        <begin position="171"/>
        <end position="271"/>
    </location>
</feature>
<feature type="region of interest" description="Disordered" evidence="4">
    <location>
        <begin position="1"/>
        <end position="65"/>
    </location>
</feature>
<feature type="region of interest" description="Disordered" evidence="4">
    <location>
        <begin position="134"/>
        <end position="172"/>
    </location>
</feature>
<feature type="coiled-coil region" evidence="2">
    <location>
        <begin position="62"/>
        <end position="99"/>
    </location>
</feature>
<feature type="compositionally biased region" description="Polar residues" evidence="4">
    <location>
        <begin position="1"/>
        <end position="15"/>
    </location>
</feature>
<feature type="compositionally biased region" description="Polar residues" evidence="4">
    <location>
        <begin position="134"/>
        <end position="148"/>
    </location>
</feature>
<feature type="compositionally biased region" description="Basic and acidic residues" evidence="4">
    <location>
        <begin position="162"/>
        <end position="172"/>
    </location>
</feature>
<feature type="splice variant" id="VSP_026961" description="In isoform 3." evidence="7">
    <location>
        <begin position="1"/>
        <end position="98"/>
    </location>
</feature>
<feature type="splice variant" id="VSP_026962" description="In isoform 3." evidence="7">
    <original>QV</original>
    <variation>ML</variation>
    <location>
        <begin position="99"/>
        <end position="100"/>
    </location>
</feature>
<feature type="splice variant" id="VSP_026963" description="In isoform 2." evidence="7">
    <original>VLPQAVT</original>
    <variation>AWSRELP</variation>
    <location>
        <begin position="100"/>
        <end position="106"/>
    </location>
</feature>
<feature type="splice variant" id="VSP_026964" description="In isoform 2." evidence="7">
    <location>
        <begin position="107"/>
        <end position="279"/>
    </location>
</feature>
<feature type="splice variant" id="VSP_026965" description="In isoform 4." evidence="6">
    <original>IARCNKSKP</original>
    <variation>NPLLQGTKL</variation>
    <location>
        <begin position="181"/>
        <end position="189"/>
    </location>
</feature>
<feature type="splice variant" id="VSP_026966" description="In isoform 4." evidence="6">
    <location>
        <begin position="190"/>
        <end position="279"/>
    </location>
</feature>
<feature type="helix" evidence="8">
    <location>
        <begin position="178"/>
        <end position="182"/>
    </location>
</feature>
<feature type="helix" evidence="8">
    <location>
        <begin position="189"/>
        <end position="200"/>
    </location>
</feature>
<feature type="helix" evidence="8">
    <location>
        <begin position="203"/>
        <end position="207"/>
    </location>
</feature>
<feature type="strand" evidence="8">
    <location>
        <begin position="210"/>
        <end position="212"/>
    </location>
</feature>
<feature type="helix" evidence="8">
    <location>
        <begin position="230"/>
        <end position="243"/>
    </location>
</feature>
<feature type="helix" evidence="8">
    <location>
        <begin position="249"/>
        <end position="262"/>
    </location>
</feature>
<protein>
    <recommendedName>
        <fullName>BEN domain-containing protein 6</fullName>
    </recommendedName>
</protein>
<gene>
    <name type="primary">BEND6</name>
    <name type="synonym">C6orf65</name>
</gene>
<proteinExistence type="evidence at protein level"/>
<accession>Q5SZJ8</accession>
<accession>Q4G0W8</accession>
<accession>Q8N662</accession>
<accession>Q96NS6</accession>
<reference key="1">
    <citation type="journal article" date="2004" name="Nat. Genet.">
        <title>Complete sequencing and characterization of 21,243 full-length human cDNAs.</title>
        <authorList>
            <person name="Ota T."/>
            <person name="Suzuki Y."/>
            <person name="Nishikawa T."/>
            <person name="Otsuki T."/>
            <person name="Sugiyama T."/>
            <person name="Irie R."/>
            <person name="Wakamatsu A."/>
            <person name="Hayashi K."/>
            <person name="Sato H."/>
            <person name="Nagai K."/>
            <person name="Kimura K."/>
            <person name="Makita H."/>
            <person name="Sekine M."/>
            <person name="Obayashi M."/>
            <person name="Nishi T."/>
            <person name="Shibahara T."/>
            <person name="Tanaka T."/>
            <person name="Ishii S."/>
            <person name="Yamamoto J."/>
            <person name="Saito K."/>
            <person name="Kawai Y."/>
            <person name="Isono Y."/>
            <person name="Nakamura Y."/>
            <person name="Nagahari K."/>
            <person name="Murakami K."/>
            <person name="Yasuda T."/>
            <person name="Iwayanagi T."/>
            <person name="Wagatsuma M."/>
            <person name="Shiratori A."/>
            <person name="Sudo H."/>
            <person name="Hosoiri T."/>
            <person name="Kaku Y."/>
            <person name="Kodaira H."/>
            <person name="Kondo H."/>
            <person name="Sugawara M."/>
            <person name="Takahashi M."/>
            <person name="Kanda K."/>
            <person name="Yokoi T."/>
            <person name="Furuya T."/>
            <person name="Kikkawa E."/>
            <person name="Omura Y."/>
            <person name="Abe K."/>
            <person name="Kamihara K."/>
            <person name="Katsuta N."/>
            <person name="Sato K."/>
            <person name="Tanikawa M."/>
            <person name="Yamazaki M."/>
            <person name="Ninomiya K."/>
            <person name="Ishibashi T."/>
            <person name="Yamashita H."/>
            <person name="Murakawa K."/>
            <person name="Fujimori K."/>
            <person name="Tanai H."/>
            <person name="Kimata M."/>
            <person name="Watanabe M."/>
            <person name="Hiraoka S."/>
            <person name="Chiba Y."/>
            <person name="Ishida S."/>
            <person name="Ono Y."/>
            <person name="Takiguchi S."/>
            <person name="Watanabe S."/>
            <person name="Yosida M."/>
            <person name="Hotuta T."/>
            <person name="Kusano J."/>
            <person name="Kanehori K."/>
            <person name="Takahashi-Fujii A."/>
            <person name="Hara H."/>
            <person name="Tanase T.-O."/>
            <person name="Nomura Y."/>
            <person name="Togiya S."/>
            <person name="Komai F."/>
            <person name="Hara R."/>
            <person name="Takeuchi K."/>
            <person name="Arita M."/>
            <person name="Imose N."/>
            <person name="Musashino K."/>
            <person name="Yuuki H."/>
            <person name="Oshima A."/>
            <person name="Sasaki N."/>
            <person name="Aotsuka S."/>
            <person name="Yoshikawa Y."/>
            <person name="Matsunawa H."/>
            <person name="Ichihara T."/>
            <person name="Shiohata N."/>
            <person name="Sano S."/>
            <person name="Moriya S."/>
            <person name="Momiyama H."/>
            <person name="Satoh N."/>
            <person name="Takami S."/>
            <person name="Terashima Y."/>
            <person name="Suzuki O."/>
            <person name="Nakagawa S."/>
            <person name="Senoh A."/>
            <person name="Mizoguchi H."/>
            <person name="Goto Y."/>
            <person name="Shimizu F."/>
            <person name="Wakebe H."/>
            <person name="Hishigaki H."/>
            <person name="Watanabe T."/>
            <person name="Sugiyama A."/>
            <person name="Takemoto M."/>
            <person name="Kawakami B."/>
            <person name="Yamazaki M."/>
            <person name="Watanabe K."/>
            <person name="Kumagai A."/>
            <person name="Itakura S."/>
            <person name="Fukuzumi Y."/>
            <person name="Fujimori Y."/>
            <person name="Komiyama M."/>
            <person name="Tashiro H."/>
            <person name="Tanigami A."/>
            <person name="Fujiwara T."/>
            <person name="Ono T."/>
            <person name="Yamada K."/>
            <person name="Fujii Y."/>
            <person name="Ozaki K."/>
            <person name="Hirao M."/>
            <person name="Ohmori Y."/>
            <person name="Kawabata A."/>
            <person name="Hikiji T."/>
            <person name="Kobatake N."/>
            <person name="Inagaki H."/>
            <person name="Ikema Y."/>
            <person name="Okamoto S."/>
            <person name="Okitani R."/>
            <person name="Kawakami T."/>
            <person name="Noguchi S."/>
            <person name="Itoh T."/>
            <person name="Shigeta K."/>
            <person name="Senba T."/>
            <person name="Matsumura K."/>
            <person name="Nakajima Y."/>
            <person name="Mizuno T."/>
            <person name="Morinaga M."/>
            <person name="Sasaki M."/>
            <person name="Togashi T."/>
            <person name="Oyama M."/>
            <person name="Hata H."/>
            <person name="Watanabe M."/>
            <person name="Komatsu T."/>
            <person name="Mizushima-Sugano J."/>
            <person name="Satoh T."/>
            <person name="Shirai Y."/>
            <person name="Takahashi Y."/>
            <person name="Nakagawa K."/>
            <person name="Okumura K."/>
            <person name="Nagase T."/>
            <person name="Nomura N."/>
            <person name="Kikuchi H."/>
            <person name="Masuho Y."/>
            <person name="Yamashita R."/>
            <person name="Nakai K."/>
            <person name="Yada T."/>
            <person name="Nakamura Y."/>
            <person name="Ohara O."/>
            <person name="Isogai T."/>
            <person name="Sugano S."/>
        </authorList>
    </citation>
    <scope>NUCLEOTIDE SEQUENCE [LARGE SCALE MRNA] (ISOFORM 4)</scope>
    <source>
        <tissue>Cerebellum</tissue>
    </source>
</reference>
<reference key="2">
    <citation type="journal article" date="2003" name="Nature">
        <title>The DNA sequence and analysis of human chromosome 6.</title>
        <authorList>
            <person name="Mungall A.J."/>
            <person name="Palmer S.A."/>
            <person name="Sims S.K."/>
            <person name="Edwards C.A."/>
            <person name="Ashurst J.L."/>
            <person name="Wilming L."/>
            <person name="Jones M.C."/>
            <person name="Horton R."/>
            <person name="Hunt S.E."/>
            <person name="Scott C.E."/>
            <person name="Gilbert J.G.R."/>
            <person name="Clamp M.E."/>
            <person name="Bethel G."/>
            <person name="Milne S."/>
            <person name="Ainscough R."/>
            <person name="Almeida J.P."/>
            <person name="Ambrose K.D."/>
            <person name="Andrews T.D."/>
            <person name="Ashwell R.I.S."/>
            <person name="Babbage A.K."/>
            <person name="Bagguley C.L."/>
            <person name="Bailey J."/>
            <person name="Banerjee R."/>
            <person name="Barker D.J."/>
            <person name="Barlow K.F."/>
            <person name="Bates K."/>
            <person name="Beare D.M."/>
            <person name="Beasley H."/>
            <person name="Beasley O."/>
            <person name="Bird C.P."/>
            <person name="Blakey S.E."/>
            <person name="Bray-Allen S."/>
            <person name="Brook J."/>
            <person name="Brown A.J."/>
            <person name="Brown J.Y."/>
            <person name="Burford D.C."/>
            <person name="Burrill W."/>
            <person name="Burton J."/>
            <person name="Carder C."/>
            <person name="Carter N.P."/>
            <person name="Chapman J.C."/>
            <person name="Clark S.Y."/>
            <person name="Clark G."/>
            <person name="Clee C.M."/>
            <person name="Clegg S."/>
            <person name="Cobley V."/>
            <person name="Collier R.E."/>
            <person name="Collins J.E."/>
            <person name="Colman L.K."/>
            <person name="Corby N.R."/>
            <person name="Coville G.J."/>
            <person name="Culley K.M."/>
            <person name="Dhami P."/>
            <person name="Davies J."/>
            <person name="Dunn M."/>
            <person name="Earthrowl M.E."/>
            <person name="Ellington A.E."/>
            <person name="Evans K.A."/>
            <person name="Faulkner L."/>
            <person name="Francis M.D."/>
            <person name="Frankish A."/>
            <person name="Frankland J."/>
            <person name="French L."/>
            <person name="Garner P."/>
            <person name="Garnett J."/>
            <person name="Ghori M.J."/>
            <person name="Gilby L.M."/>
            <person name="Gillson C.J."/>
            <person name="Glithero R.J."/>
            <person name="Grafham D.V."/>
            <person name="Grant M."/>
            <person name="Gribble S."/>
            <person name="Griffiths C."/>
            <person name="Griffiths M.N.D."/>
            <person name="Hall R."/>
            <person name="Halls K.S."/>
            <person name="Hammond S."/>
            <person name="Harley J.L."/>
            <person name="Hart E.A."/>
            <person name="Heath P.D."/>
            <person name="Heathcott R."/>
            <person name="Holmes S.J."/>
            <person name="Howden P.J."/>
            <person name="Howe K.L."/>
            <person name="Howell G.R."/>
            <person name="Huckle E."/>
            <person name="Humphray S.J."/>
            <person name="Humphries M.D."/>
            <person name="Hunt A.R."/>
            <person name="Johnson C.M."/>
            <person name="Joy A.A."/>
            <person name="Kay M."/>
            <person name="Keenan S.J."/>
            <person name="Kimberley A.M."/>
            <person name="King A."/>
            <person name="Laird G.K."/>
            <person name="Langford C."/>
            <person name="Lawlor S."/>
            <person name="Leongamornlert D.A."/>
            <person name="Leversha M."/>
            <person name="Lloyd C.R."/>
            <person name="Lloyd D.M."/>
            <person name="Loveland J.E."/>
            <person name="Lovell J."/>
            <person name="Martin S."/>
            <person name="Mashreghi-Mohammadi M."/>
            <person name="Maslen G.L."/>
            <person name="Matthews L."/>
            <person name="McCann O.T."/>
            <person name="McLaren S.J."/>
            <person name="McLay K."/>
            <person name="McMurray A."/>
            <person name="Moore M.J.F."/>
            <person name="Mullikin J.C."/>
            <person name="Niblett D."/>
            <person name="Nickerson T."/>
            <person name="Novik K.L."/>
            <person name="Oliver K."/>
            <person name="Overton-Larty E.K."/>
            <person name="Parker A."/>
            <person name="Patel R."/>
            <person name="Pearce A.V."/>
            <person name="Peck A.I."/>
            <person name="Phillimore B.J.C.T."/>
            <person name="Phillips S."/>
            <person name="Plumb R.W."/>
            <person name="Porter K.M."/>
            <person name="Ramsey Y."/>
            <person name="Ranby S.A."/>
            <person name="Rice C.M."/>
            <person name="Ross M.T."/>
            <person name="Searle S.M."/>
            <person name="Sehra H.K."/>
            <person name="Sheridan E."/>
            <person name="Skuce C.D."/>
            <person name="Smith S."/>
            <person name="Smith M."/>
            <person name="Spraggon L."/>
            <person name="Squares S.L."/>
            <person name="Steward C.A."/>
            <person name="Sycamore N."/>
            <person name="Tamlyn-Hall G."/>
            <person name="Tester J."/>
            <person name="Theaker A.J."/>
            <person name="Thomas D.W."/>
            <person name="Thorpe A."/>
            <person name="Tracey A."/>
            <person name="Tromans A."/>
            <person name="Tubby B."/>
            <person name="Wall M."/>
            <person name="Wallis J.M."/>
            <person name="West A.P."/>
            <person name="White S.S."/>
            <person name="Whitehead S.L."/>
            <person name="Whittaker H."/>
            <person name="Wild A."/>
            <person name="Willey D.J."/>
            <person name="Wilmer T.E."/>
            <person name="Wood J.M."/>
            <person name="Wray P.W."/>
            <person name="Wyatt J.C."/>
            <person name="Young L."/>
            <person name="Younger R.M."/>
            <person name="Bentley D.R."/>
            <person name="Coulson A."/>
            <person name="Durbin R.M."/>
            <person name="Hubbard T."/>
            <person name="Sulston J.E."/>
            <person name="Dunham I."/>
            <person name="Rogers J."/>
            <person name="Beck S."/>
        </authorList>
    </citation>
    <scope>NUCLEOTIDE SEQUENCE [LARGE SCALE GENOMIC DNA]</scope>
</reference>
<reference key="3">
    <citation type="journal article" date="2004" name="Genome Res.">
        <title>The status, quality, and expansion of the NIH full-length cDNA project: the Mammalian Gene Collection (MGC).</title>
        <authorList>
            <consortium name="The MGC Project Team"/>
        </authorList>
    </citation>
    <scope>NUCLEOTIDE SEQUENCE [LARGE SCALE MRNA] (ISOFORMS 2 AND 3)</scope>
    <source>
        <tissue>Brain</tissue>
    </source>
</reference>
<reference key="4">
    <citation type="journal article" date="2013" name="Development">
        <title>BEND6 is a nuclear antagonist of Notch signaling during self-renewal of neural stem cells.</title>
        <authorList>
            <person name="Dai Q."/>
            <person name="Andreu-Agullo C."/>
            <person name="Insolera R."/>
            <person name="Wong L.C."/>
            <person name="Shi S.H."/>
            <person name="Lai E.C."/>
        </authorList>
    </citation>
    <scope>FUNCTION</scope>
    <scope>INTERACTION WITH RBPJ</scope>
</reference>
<organism>
    <name type="scientific">Homo sapiens</name>
    <name type="common">Human</name>
    <dbReference type="NCBI Taxonomy" id="9606"/>
    <lineage>
        <taxon>Eukaryota</taxon>
        <taxon>Metazoa</taxon>
        <taxon>Chordata</taxon>
        <taxon>Craniata</taxon>
        <taxon>Vertebrata</taxon>
        <taxon>Euteleostomi</taxon>
        <taxon>Mammalia</taxon>
        <taxon>Eutheria</taxon>
        <taxon>Euarchontoglires</taxon>
        <taxon>Primates</taxon>
        <taxon>Haplorrhini</taxon>
        <taxon>Catarrhini</taxon>
        <taxon>Hominidae</taxon>
        <taxon>Homo</taxon>
    </lineage>
</organism>
<keyword id="KW-0002">3D-structure</keyword>
<keyword id="KW-0025">Alternative splicing</keyword>
<keyword id="KW-0175">Coiled coil</keyword>
<keyword id="KW-0524">Neurogenesis</keyword>
<keyword id="KW-0539">Nucleus</keyword>
<keyword id="KW-1267">Proteomics identification</keyword>
<keyword id="KW-1185">Reference proteome</keyword>
<keyword id="KW-0678">Repressor</keyword>
<keyword id="KW-0804">Transcription</keyword>
<keyword id="KW-0805">Transcription regulation</keyword>
<sequence length="279" mass="31222">MQKIVQTDEITNTQAFRKGKRKRTETMDSENANSDMDKGQRDPYSGNAFLPGESSSEDEEPLAELSKEELCAKIKSLKEKLTNTRKENSRLRQSLVMLQVLPQAVTQFEELVGMAEALLKGGGTMSTSASTLWRATNNSSPDSFASTCSNSNSNSSSPVSLKPEEEHQTDEKQFQIEKWQIARCNKSKPQKFINDLMQVLYTNEYMATHSLTGAKSSTSRDKAVKPAMNQNEVQEIIGVTKQLFPNTDDVSIRRMIGQKLNNCTKKPNLSKNLNSQDIK</sequence>
<name>BEND6_HUMAN</name>
<dbReference type="EMBL" id="AK054724">
    <property type="protein sequence ID" value="BAB70799.1"/>
    <property type="molecule type" value="mRNA"/>
</dbReference>
<dbReference type="EMBL" id="AL590037">
    <property type="status" value="NOT_ANNOTATED_CDS"/>
    <property type="molecule type" value="Genomic_DNA"/>
</dbReference>
<dbReference type="EMBL" id="BC022988">
    <property type="protein sequence ID" value="AAH22988.1"/>
    <property type="molecule type" value="mRNA"/>
</dbReference>
<dbReference type="EMBL" id="BC036119">
    <property type="protein sequence ID" value="AAH36119.1"/>
    <property type="molecule type" value="mRNA"/>
</dbReference>
<dbReference type="CCDS" id="CCDS43476.1">
    <molecule id="Q5SZJ8-1"/>
</dbReference>
<dbReference type="CCDS" id="CCDS83102.1">
    <molecule id="Q5SZJ8-2"/>
</dbReference>
<dbReference type="RefSeq" id="NP_001305468.1">
    <molecule id="Q5SZJ8-2"/>
    <property type="nucleotide sequence ID" value="NM_001318539.2"/>
</dbReference>
<dbReference type="RefSeq" id="NP_689944.2">
    <molecule id="Q5SZJ8-1"/>
    <property type="nucleotide sequence ID" value="NM_152731.3"/>
</dbReference>
<dbReference type="RefSeq" id="XP_005248946.1">
    <molecule id="Q5SZJ8-3"/>
    <property type="nucleotide sequence ID" value="XM_005248889.2"/>
</dbReference>
<dbReference type="RefSeq" id="XP_016865895.1">
    <molecule id="Q5SZJ8-1"/>
    <property type="nucleotide sequence ID" value="XM_017010406.2"/>
</dbReference>
<dbReference type="RefSeq" id="XP_016865896.1">
    <molecule id="Q5SZJ8-1"/>
    <property type="nucleotide sequence ID" value="XM_017010407.3"/>
</dbReference>
<dbReference type="RefSeq" id="XP_047274280.1">
    <molecule id="Q5SZJ8-2"/>
    <property type="nucleotide sequence ID" value="XM_047418324.1"/>
</dbReference>
<dbReference type="RefSeq" id="XP_054210524.1">
    <molecule id="Q5SZJ8-1"/>
    <property type="nucleotide sequence ID" value="XM_054354549.1"/>
</dbReference>
<dbReference type="RefSeq" id="XP_054210525.1">
    <molecule id="Q5SZJ8-1"/>
    <property type="nucleotide sequence ID" value="XM_054354550.1"/>
</dbReference>
<dbReference type="RefSeq" id="XP_054210526.1">
    <molecule id="Q5SZJ8-3"/>
    <property type="nucleotide sequence ID" value="XM_054354551.1"/>
</dbReference>
<dbReference type="RefSeq" id="XP_054210528.1">
    <molecule id="Q5SZJ8-2"/>
    <property type="nucleotide sequence ID" value="XM_054354553.1"/>
</dbReference>
<dbReference type="PDB" id="7YUL">
    <property type="method" value="X-ray"/>
    <property type="resolution" value="1.82 A"/>
    <property type="chains" value="A=170-271"/>
</dbReference>
<dbReference type="PDB" id="7YUN">
    <property type="method" value="X-ray"/>
    <property type="resolution" value="2.13 A"/>
    <property type="chains" value="A/B=170-271"/>
</dbReference>
<dbReference type="PDBsum" id="7YUL"/>
<dbReference type="PDBsum" id="7YUN"/>
<dbReference type="SMR" id="Q5SZJ8"/>
<dbReference type="BioGRID" id="128711">
    <property type="interactions" value="7"/>
</dbReference>
<dbReference type="FunCoup" id="Q5SZJ8">
    <property type="interactions" value="950"/>
</dbReference>
<dbReference type="IntAct" id="Q5SZJ8">
    <property type="interactions" value="6"/>
</dbReference>
<dbReference type="MINT" id="Q5SZJ8"/>
<dbReference type="STRING" id="9606.ENSP00000359782"/>
<dbReference type="PhosphoSitePlus" id="Q5SZJ8"/>
<dbReference type="BioMuta" id="BEND6"/>
<dbReference type="DMDM" id="156630915"/>
<dbReference type="jPOST" id="Q5SZJ8"/>
<dbReference type="MassIVE" id="Q5SZJ8"/>
<dbReference type="PaxDb" id="9606-ENSP00000359782"/>
<dbReference type="PeptideAtlas" id="Q5SZJ8"/>
<dbReference type="ProteomicsDB" id="64070">
    <molecule id="Q5SZJ8-1"/>
</dbReference>
<dbReference type="ProteomicsDB" id="64072">
    <molecule id="Q5SZJ8-3"/>
</dbReference>
<dbReference type="TopDownProteomics" id="Q5SZJ8-2">
    <molecule id="Q5SZJ8-2"/>
</dbReference>
<dbReference type="Antibodypedia" id="31120">
    <property type="antibodies" value="78 antibodies from 17 providers"/>
</dbReference>
<dbReference type="DNASU" id="221336"/>
<dbReference type="Ensembl" id="ENST00000370746.8">
    <molecule id="Q5SZJ8-1"/>
    <property type="protein sequence ID" value="ENSP00000359782.3"/>
    <property type="gene ID" value="ENSG00000151917.18"/>
</dbReference>
<dbReference type="Ensembl" id="ENST00000370748.7">
    <molecule id="Q5SZJ8-2"/>
    <property type="protein sequence ID" value="ENSP00000359784.3"/>
    <property type="gene ID" value="ENSG00000151917.18"/>
</dbReference>
<dbReference type="GeneID" id="221336"/>
<dbReference type="KEGG" id="hsa:221336"/>
<dbReference type="MANE-Select" id="ENST00000370746.8">
    <property type="protein sequence ID" value="ENSP00000359782.3"/>
    <property type="RefSeq nucleotide sequence ID" value="NM_152731.3"/>
    <property type="RefSeq protein sequence ID" value="NP_689944.2"/>
</dbReference>
<dbReference type="UCSC" id="uc010kab.4">
    <molecule id="Q5SZJ8-1"/>
    <property type="organism name" value="human"/>
</dbReference>
<dbReference type="AGR" id="HGNC:20871"/>
<dbReference type="CTD" id="221336"/>
<dbReference type="DisGeNET" id="221336"/>
<dbReference type="GeneCards" id="BEND6"/>
<dbReference type="HGNC" id="HGNC:20871">
    <property type="gene designation" value="BEND6"/>
</dbReference>
<dbReference type="HPA" id="ENSG00000151917">
    <property type="expression patterns" value="Tissue enriched (brain)"/>
</dbReference>
<dbReference type="neXtProt" id="NX_Q5SZJ8"/>
<dbReference type="OpenTargets" id="ENSG00000151917"/>
<dbReference type="PharmGKB" id="PA164716559"/>
<dbReference type="VEuPathDB" id="HostDB:ENSG00000151917"/>
<dbReference type="eggNOG" id="ENOG502SDDU">
    <property type="taxonomic scope" value="Eukaryota"/>
</dbReference>
<dbReference type="GeneTree" id="ENSGT00390000016954"/>
<dbReference type="HOGENOM" id="CLU_065590_0_0_1"/>
<dbReference type="InParanoid" id="Q5SZJ8"/>
<dbReference type="OMA" id="WRAANNS"/>
<dbReference type="OrthoDB" id="8858716at2759"/>
<dbReference type="PAN-GO" id="Q5SZJ8">
    <property type="GO annotations" value="4 GO annotations based on evolutionary models"/>
</dbReference>
<dbReference type="PhylomeDB" id="Q5SZJ8"/>
<dbReference type="TreeFam" id="TF335394"/>
<dbReference type="PathwayCommons" id="Q5SZJ8"/>
<dbReference type="SignaLink" id="Q5SZJ8"/>
<dbReference type="BioGRID-ORCS" id="221336">
    <property type="hits" value="8 hits in 1141 CRISPR screens"/>
</dbReference>
<dbReference type="GenomeRNAi" id="221336"/>
<dbReference type="Pharos" id="Q5SZJ8">
    <property type="development level" value="Tdark"/>
</dbReference>
<dbReference type="PRO" id="PR:Q5SZJ8"/>
<dbReference type="Proteomes" id="UP000005640">
    <property type="component" value="Chromosome 6"/>
</dbReference>
<dbReference type="RNAct" id="Q5SZJ8">
    <property type="molecule type" value="protein"/>
</dbReference>
<dbReference type="Bgee" id="ENSG00000151917">
    <property type="expression patterns" value="Expressed in endothelial cell and 137 other cell types or tissues"/>
</dbReference>
<dbReference type="ExpressionAtlas" id="Q5SZJ8">
    <property type="expression patterns" value="baseline and differential"/>
</dbReference>
<dbReference type="GO" id="GO:0005634">
    <property type="term" value="C:nucleus"/>
    <property type="evidence" value="ECO:0000318"/>
    <property type="project" value="GO_Central"/>
</dbReference>
<dbReference type="GO" id="GO:0003682">
    <property type="term" value="F:chromatin binding"/>
    <property type="evidence" value="ECO:0007669"/>
    <property type="project" value="Ensembl"/>
</dbReference>
<dbReference type="GO" id="GO:0003677">
    <property type="term" value="F:DNA binding"/>
    <property type="evidence" value="ECO:0007669"/>
    <property type="project" value="InterPro"/>
</dbReference>
<dbReference type="GO" id="GO:0003714">
    <property type="term" value="F:transcription corepressor activity"/>
    <property type="evidence" value="ECO:0000316"/>
    <property type="project" value="MGI"/>
</dbReference>
<dbReference type="GO" id="GO:0045746">
    <property type="term" value="P:negative regulation of Notch signaling pathway"/>
    <property type="evidence" value="ECO:0000318"/>
    <property type="project" value="GO_Central"/>
</dbReference>
<dbReference type="GO" id="GO:0007399">
    <property type="term" value="P:nervous system development"/>
    <property type="evidence" value="ECO:0007669"/>
    <property type="project" value="UniProtKB-KW"/>
</dbReference>
<dbReference type="GO" id="GO:0045666">
    <property type="term" value="P:positive regulation of neuron differentiation"/>
    <property type="evidence" value="ECO:0000318"/>
    <property type="project" value="GO_Central"/>
</dbReference>
<dbReference type="FunFam" id="1.10.10.2590:FF:000004">
    <property type="entry name" value="BEN domain-containing protein 6 isoform X1"/>
    <property type="match status" value="1"/>
</dbReference>
<dbReference type="Gene3D" id="1.10.10.2590">
    <property type="entry name" value="BEN domain"/>
    <property type="match status" value="1"/>
</dbReference>
<dbReference type="InterPro" id="IPR018379">
    <property type="entry name" value="BEN_domain"/>
</dbReference>
<dbReference type="InterPro" id="IPR037496">
    <property type="entry name" value="BEND6-like"/>
</dbReference>
<dbReference type="PANTHER" id="PTHR35346">
    <property type="entry name" value="BEN DOMAIN-CONTAINING PROTEIN 6"/>
    <property type="match status" value="1"/>
</dbReference>
<dbReference type="PANTHER" id="PTHR35346:SF1">
    <property type="entry name" value="BEN DOMAIN-CONTAINING PROTEIN 6"/>
    <property type="match status" value="1"/>
</dbReference>
<dbReference type="Pfam" id="PF10523">
    <property type="entry name" value="BEN"/>
    <property type="match status" value="1"/>
</dbReference>
<dbReference type="SMART" id="SM01025">
    <property type="entry name" value="BEN"/>
    <property type="match status" value="1"/>
</dbReference>
<dbReference type="PROSITE" id="PS51457">
    <property type="entry name" value="BEN"/>
    <property type="match status" value="1"/>
</dbReference>
<evidence type="ECO:0000250" key="1">
    <source>
        <dbReference type="UniProtKB" id="Q6PFX2"/>
    </source>
</evidence>
<evidence type="ECO:0000255" key="2"/>
<evidence type="ECO:0000255" key="3">
    <source>
        <dbReference type="PROSITE-ProRule" id="PRU00784"/>
    </source>
</evidence>
<evidence type="ECO:0000256" key="4">
    <source>
        <dbReference type="SAM" id="MobiDB-lite"/>
    </source>
</evidence>
<evidence type="ECO:0000269" key="5">
    <source>
    </source>
</evidence>
<evidence type="ECO:0000303" key="6">
    <source>
    </source>
</evidence>
<evidence type="ECO:0000303" key="7">
    <source>
    </source>
</evidence>
<evidence type="ECO:0007829" key="8">
    <source>
        <dbReference type="PDB" id="7YUL"/>
    </source>
</evidence>